<dbReference type="EC" id="6.1.1.20" evidence="1"/>
<dbReference type="EMBL" id="BX936398">
    <property type="protein sequence ID" value="CAH21575.1"/>
    <property type="molecule type" value="Genomic_DNA"/>
</dbReference>
<dbReference type="RefSeq" id="WP_011192546.1">
    <property type="nucleotide sequence ID" value="NC_006155.1"/>
</dbReference>
<dbReference type="SMR" id="Q669Z5"/>
<dbReference type="GeneID" id="49785658"/>
<dbReference type="KEGG" id="ypo:BZ17_117"/>
<dbReference type="KEGG" id="yps:YPTB2337"/>
<dbReference type="PATRIC" id="fig|273123.14.peg.126"/>
<dbReference type="Proteomes" id="UP000001011">
    <property type="component" value="Chromosome"/>
</dbReference>
<dbReference type="GO" id="GO:0005737">
    <property type="term" value="C:cytoplasm"/>
    <property type="evidence" value="ECO:0007669"/>
    <property type="project" value="UniProtKB-SubCell"/>
</dbReference>
<dbReference type="GO" id="GO:0005524">
    <property type="term" value="F:ATP binding"/>
    <property type="evidence" value="ECO:0007669"/>
    <property type="project" value="UniProtKB-UniRule"/>
</dbReference>
<dbReference type="GO" id="GO:0000287">
    <property type="term" value="F:magnesium ion binding"/>
    <property type="evidence" value="ECO:0007669"/>
    <property type="project" value="UniProtKB-UniRule"/>
</dbReference>
<dbReference type="GO" id="GO:0004826">
    <property type="term" value="F:phenylalanine-tRNA ligase activity"/>
    <property type="evidence" value="ECO:0007669"/>
    <property type="project" value="UniProtKB-UniRule"/>
</dbReference>
<dbReference type="GO" id="GO:0000049">
    <property type="term" value="F:tRNA binding"/>
    <property type="evidence" value="ECO:0007669"/>
    <property type="project" value="InterPro"/>
</dbReference>
<dbReference type="GO" id="GO:0006432">
    <property type="term" value="P:phenylalanyl-tRNA aminoacylation"/>
    <property type="evidence" value="ECO:0007669"/>
    <property type="project" value="UniProtKB-UniRule"/>
</dbReference>
<dbReference type="CDD" id="cd00496">
    <property type="entry name" value="PheRS_alpha_core"/>
    <property type="match status" value="1"/>
</dbReference>
<dbReference type="FunFam" id="3.30.930.10:FF:000003">
    <property type="entry name" value="Phenylalanine--tRNA ligase alpha subunit"/>
    <property type="match status" value="1"/>
</dbReference>
<dbReference type="Gene3D" id="3.30.930.10">
    <property type="entry name" value="Bira Bifunctional Protein, Domain 2"/>
    <property type="match status" value="1"/>
</dbReference>
<dbReference type="HAMAP" id="MF_00281">
    <property type="entry name" value="Phe_tRNA_synth_alpha1"/>
    <property type="match status" value="1"/>
</dbReference>
<dbReference type="InterPro" id="IPR006195">
    <property type="entry name" value="aa-tRNA-synth_II"/>
</dbReference>
<dbReference type="InterPro" id="IPR045864">
    <property type="entry name" value="aa-tRNA-synth_II/BPL/LPL"/>
</dbReference>
<dbReference type="InterPro" id="IPR004529">
    <property type="entry name" value="Phe-tRNA-synth_IIc_asu"/>
</dbReference>
<dbReference type="InterPro" id="IPR004188">
    <property type="entry name" value="Phe-tRNA_ligase_II_N"/>
</dbReference>
<dbReference type="InterPro" id="IPR022911">
    <property type="entry name" value="Phe_tRNA_ligase_alpha1_bac"/>
</dbReference>
<dbReference type="InterPro" id="IPR002319">
    <property type="entry name" value="Phenylalanyl-tRNA_Synthase"/>
</dbReference>
<dbReference type="InterPro" id="IPR010978">
    <property type="entry name" value="tRNA-bd_arm"/>
</dbReference>
<dbReference type="NCBIfam" id="TIGR00468">
    <property type="entry name" value="pheS"/>
    <property type="match status" value="1"/>
</dbReference>
<dbReference type="PANTHER" id="PTHR11538:SF41">
    <property type="entry name" value="PHENYLALANINE--TRNA LIGASE, MITOCHONDRIAL"/>
    <property type="match status" value="1"/>
</dbReference>
<dbReference type="PANTHER" id="PTHR11538">
    <property type="entry name" value="PHENYLALANYL-TRNA SYNTHETASE"/>
    <property type="match status" value="1"/>
</dbReference>
<dbReference type="Pfam" id="PF02912">
    <property type="entry name" value="Phe_tRNA-synt_N"/>
    <property type="match status" value="1"/>
</dbReference>
<dbReference type="Pfam" id="PF01409">
    <property type="entry name" value="tRNA-synt_2d"/>
    <property type="match status" value="1"/>
</dbReference>
<dbReference type="SUPFAM" id="SSF55681">
    <property type="entry name" value="Class II aaRS and biotin synthetases"/>
    <property type="match status" value="1"/>
</dbReference>
<dbReference type="SUPFAM" id="SSF46589">
    <property type="entry name" value="tRNA-binding arm"/>
    <property type="match status" value="1"/>
</dbReference>
<dbReference type="PROSITE" id="PS50862">
    <property type="entry name" value="AA_TRNA_LIGASE_II"/>
    <property type="match status" value="1"/>
</dbReference>
<name>SYFA_YERPS</name>
<accession>Q669Z5</accession>
<sequence>MPHLAELVAKAKAAVEDAQDIAALDLVRVEYLGKKGHLTLQMTSLRELPAEERPAAGAVINQAKQEVQEALNARKEKLESAVLNARLAAETIDVSLPGRRMENGGLHPVTRTIERIETFFGELGFSVESGPEIEDDYHNFDALNIPAHHPARADHDTFWFDATRLLRTQTSGVQIRTMQEQQPPIRIIVPGRVYRNDYDQTHTPMFHQMEGLIVDRDISFTNLKGTLHDFLRNFFEEDLQIRFRPSYFPFTEPSAEVDVMGKNGKWLEVLGCGMVHPNVLRNVGIDPEIYSGFAFGMGMERLTMLRYGVTDLRAFFENDLRFLKQFK</sequence>
<feature type="chain" id="PRO_0000126803" description="Phenylalanine--tRNA ligase alpha subunit">
    <location>
        <begin position="1"/>
        <end position="327"/>
    </location>
</feature>
<feature type="binding site" evidence="1">
    <location>
        <position position="252"/>
    </location>
    <ligand>
        <name>Mg(2+)</name>
        <dbReference type="ChEBI" id="CHEBI:18420"/>
        <note>shared with beta subunit</note>
    </ligand>
</feature>
<gene>
    <name evidence="1" type="primary">pheS</name>
    <name type="ordered locus">YPTB2337</name>
</gene>
<evidence type="ECO:0000255" key="1">
    <source>
        <dbReference type="HAMAP-Rule" id="MF_00281"/>
    </source>
</evidence>
<comment type="catalytic activity">
    <reaction evidence="1">
        <text>tRNA(Phe) + L-phenylalanine + ATP = L-phenylalanyl-tRNA(Phe) + AMP + diphosphate + H(+)</text>
        <dbReference type="Rhea" id="RHEA:19413"/>
        <dbReference type="Rhea" id="RHEA-COMP:9668"/>
        <dbReference type="Rhea" id="RHEA-COMP:9699"/>
        <dbReference type="ChEBI" id="CHEBI:15378"/>
        <dbReference type="ChEBI" id="CHEBI:30616"/>
        <dbReference type="ChEBI" id="CHEBI:33019"/>
        <dbReference type="ChEBI" id="CHEBI:58095"/>
        <dbReference type="ChEBI" id="CHEBI:78442"/>
        <dbReference type="ChEBI" id="CHEBI:78531"/>
        <dbReference type="ChEBI" id="CHEBI:456215"/>
        <dbReference type="EC" id="6.1.1.20"/>
    </reaction>
</comment>
<comment type="cofactor">
    <cofactor evidence="1">
        <name>Mg(2+)</name>
        <dbReference type="ChEBI" id="CHEBI:18420"/>
    </cofactor>
    <text evidence="1">Binds 2 magnesium ions per tetramer.</text>
</comment>
<comment type="subunit">
    <text evidence="1">Tetramer of two alpha and two beta subunits.</text>
</comment>
<comment type="subcellular location">
    <subcellularLocation>
        <location evidence="1">Cytoplasm</location>
    </subcellularLocation>
</comment>
<comment type="similarity">
    <text evidence="1">Belongs to the class-II aminoacyl-tRNA synthetase family. Phe-tRNA synthetase alpha subunit type 1 subfamily.</text>
</comment>
<protein>
    <recommendedName>
        <fullName evidence="1">Phenylalanine--tRNA ligase alpha subunit</fullName>
        <ecNumber evidence="1">6.1.1.20</ecNumber>
    </recommendedName>
    <alternativeName>
        <fullName evidence="1">Phenylalanyl-tRNA synthetase alpha subunit</fullName>
        <shortName evidence="1">PheRS</shortName>
    </alternativeName>
</protein>
<organism>
    <name type="scientific">Yersinia pseudotuberculosis serotype I (strain IP32953)</name>
    <dbReference type="NCBI Taxonomy" id="273123"/>
    <lineage>
        <taxon>Bacteria</taxon>
        <taxon>Pseudomonadati</taxon>
        <taxon>Pseudomonadota</taxon>
        <taxon>Gammaproteobacteria</taxon>
        <taxon>Enterobacterales</taxon>
        <taxon>Yersiniaceae</taxon>
        <taxon>Yersinia</taxon>
    </lineage>
</organism>
<keyword id="KW-0030">Aminoacyl-tRNA synthetase</keyword>
<keyword id="KW-0067">ATP-binding</keyword>
<keyword id="KW-0963">Cytoplasm</keyword>
<keyword id="KW-0436">Ligase</keyword>
<keyword id="KW-0460">Magnesium</keyword>
<keyword id="KW-0479">Metal-binding</keyword>
<keyword id="KW-0547">Nucleotide-binding</keyword>
<keyword id="KW-0648">Protein biosynthesis</keyword>
<reference key="1">
    <citation type="journal article" date="2004" name="Proc. Natl. Acad. Sci. U.S.A.">
        <title>Insights into the evolution of Yersinia pestis through whole-genome comparison with Yersinia pseudotuberculosis.</title>
        <authorList>
            <person name="Chain P.S.G."/>
            <person name="Carniel E."/>
            <person name="Larimer F.W."/>
            <person name="Lamerdin J."/>
            <person name="Stoutland P.O."/>
            <person name="Regala W.M."/>
            <person name="Georgescu A.M."/>
            <person name="Vergez L.M."/>
            <person name="Land M.L."/>
            <person name="Motin V.L."/>
            <person name="Brubaker R.R."/>
            <person name="Fowler J."/>
            <person name="Hinnebusch J."/>
            <person name="Marceau M."/>
            <person name="Medigue C."/>
            <person name="Simonet M."/>
            <person name="Chenal-Francisque V."/>
            <person name="Souza B."/>
            <person name="Dacheux D."/>
            <person name="Elliott J.M."/>
            <person name="Derbise A."/>
            <person name="Hauser L.J."/>
            <person name="Garcia E."/>
        </authorList>
    </citation>
    <scope>NUCLEOTIDE SEQUENCE [LARGE SCALE GENOMIC DNA]</scope>
    <source>
        <strain>IP32953</strain>
    </source>
</reference>
<proteinExistence type="inferred from homology"/>